<accession>Q2G2E1</accession>
<sequence>MEITKEIFSLIAAVMLLLGSFIALISAIGIVKFQDVFLRSHAATKSSTLSVLLTLIGVLIYFIVNTGFFSVRLLLSLVFINLTSPVGMHLVARAAYRNGAYMYRKNDAHTHASILLSSNEQNSTEALQLRAEKREEHRKKWYQND</sequence>
<gene>
    <name type="primary">mnhG2</name>
    <name type="synonym">mrpG2</name>
    <name type="ordered locus">SAOUHSC_00632</name>
</gene>
<comment type="subunit">
    <text evidence="1">May form a heterooligomeric complex that consists of seven subunits: mnhA2, mnhB2, mnhC2, mnhD2, mnhE2, mnhF2 and mnhG2.</text>
</comment>
<comment type="subcellular location">
    <subcellularLocation>
        <location evidence="3">Cell membrane</location>
        <topology evidence="3">Multi-pass membrane protein</topology>
    </subcellularLocation>
</comment>
<comment type="similarity">
    <text evidence="3">Belongs to the CPA3 antiporters (TC 2.A.63) subunit G family.</text>
</comment>
<comment type="sequence caution" evidence="3">
    <conflict type="erroneous initiation">
        <sequence resource="EMBL-CDS" id="ABD29768"/>
    </conflict>
</comment>
<evidence type="ECO:0000250" key="1"/>
<evidence type="ECO:0000255" key="2"/>
<evidence type="ECO:0000305" key="3"/>
<organism>
    <name type="scientific">Staphylococcus aureus (strain NCTC 8325 / PS 47)</name>
    <dbReference type="NCBI Taxonomy" id="93061"/>
    <lineage>
        <taxon>Bacteria</taxon>
        <taxon>Bacillati</taxon>
        <taxon>Bacillota</taxon>
        <taxon>Bacilli</taxon>
        <taxon>Bacillales</taxon>
        <taxon>Staphylococcaceae</taxon>
        <taxon>Staphylococcus</taxon>
    </lineage>
</organism>
<protein>
    <recommendedName>
        <fullName>Putative antiporter subunit mnhG2</fullName>
    </recommendedName>
    <alternativeName>
        <fullName>Mrp complex subunit G2</fullName>
    </alternativeName>
    <alternativeName>
        <fullName>Putative NADH-ubiquinone oxidoreductase subunit mnhF2</fullName>
    </alternativeName>
</protein>
<feature type="chain" id="PRO_0000372182" description="Putative antiporter subunit mnhG2">
    <location>
        <begin position="1"/>
        <end position="145"/>
    </location>
</feature>
<feature type="transmembrane region" description="Helical" evidence="2">
    <location>
        <begin position="11"/>
        <end position="31"/>
    </location>
</feature>
<feature type="transmembrane region" description="Helical" evidence="2">
    <location>
        <begin position="51"/>
        <end position="71"/>
    </location>
</feature>
<feature type="transmembrane region" description="Helical" evidence="2">
    <location>
        <begin position="72"/>
        <end position="92"/>
    </location>
</feature>
<reference key="1">
    <citation type="book" date="2006" name="Gram positive pathogens, 2nd edition">
        <title>The Staphylococcus aureus NCTC 8325 genome.</title>
        <editorList>
            <person name="Fischetti V."/>
            <person name="Novick R."/>
            <person name="Ferretti J."/>
            <person name="Portnoy D."/>
            <person name="Rood J."/>
        </editorList>
        <authorList>
            <person name="Gillaspy A.F."/>
            <person name="Worrell V."/>
            <person name="Orvis J."/>
            <person name="Roe B.A."/>
            <person name="Dyer D.W."/>
            <person name="Iandolo J.J."/>
        </authorList>
    </citation>
    <scope>NUCLEOTIDE SEQUENCE [LARGE SCALE GENOMIC DNA]</scope>
    <source>
        <strain>NCTC 8325 / PS 47</strain>
    </source>
</reference>
<keyword id="KW-0050">Antiport</keyword>
<keyword id="KW-1003">Cell membrane</keyword>
<keyword id="KW-0406">Ion transport</keyword>
<keyword id="KW-0472">Membrane</keyword>
<keyword id="KW-1185">Reference proteome</keyword>
<keyword id="KW-0812">Transmembrane</keyword>
<keyword id="KW-1133">Transmembrane helix</keyword>
<keyword id="KW-0813">Transport</keyword>
<dbReference type="EMBL" id="CP000253">
    <property type="protein sequence ID" value="ABD29768.1"/>
    <property type="status" value="ALT_INIT"/>
    <property type="molecule type" value="Genomic_DNA"/>
</dbReference>
<dbReference type="RefSeq" id="WP_000406611.1">
    <property type="nucleotide sequence ID" value="NZ_LS483365.1"/>
</dbReference>
<dbReference type="RefSeq" id="WP_011446991.1">
    <property type="nucleotide sequence ID" value="NC_007795.1"/>
</dbReference>
<dbReference type="RefSeq" id="YP_499193.1">
    <property type="nucleotide sequence ID" value="NC_007795.1"/>
</dbReference>
<dbReference type="SMR" id="Q2G2E1"/>
<dbReference type="STRING" id="93061.SAOUHSC_00632"/>
<dbReference type="PaxDb" id="1280-SAXN108_0695"/>
<dbReference type="GeneID" id="3920041"/>
<dbReference type="KEGG" id="sao:SAOUHSC_00632"/>
<dbReference type="PATRIC" id="fig|93061.5.peg.567"/>
<dbReference type="eggNOG" id="COG1320">
    <property type="taxonomic scope" value="Bacteria"/>
</dbReference>
<dbReference type="HOGENOM" id="CLU_121334_0_3_9"/>
<dbReference type="OrthoDB" id="9806575at2"/>
<dbReference type="Proteomes" id="UP000008816">
    <property type="component" value="Chromosome"/>
</dbReference>
<dbReference type="GO" id="GO:0005886">
    <property type="term" value="C:plasma membrane"/>
    <property type="evidence" value="ECO:0007669"/>
    <property type="project" value="UniProtKB-SubCell"/>
</dbReference>
<dbReference type="GO" id="GO:0015385">
    <property type="term" value="F:sodium:proton antiporter activity"/>
    <property type="evidence" value="ECO:0000318"/>
    <property type="project" value="GO_Central"/>
</dbReference>
<dbReference type="InterPro" id="IPR005133">
    <property type="entry name" value="PhaG_MnhG_YufB"/>
</dbReference>
<dbReference type="NCBIfam" id="TIGR01300">
    <property type="entry name" value="CPA3_mnhG_phaG"/>
    <property type="match status" value="1"/>
</dbReference>
<dbReference type="NCBIfam" id="NF009236">
    <property type="entry name" value="PRK12586.1"/>
    <property type="match status" value="1"/>
</dbReference>
<dbReference type="NCBIfam" id="NF009314">
    <property type="entry name" value="PRK12674.1-2"/>
    <property type="match status" value="1"/>
</dbReference>
<dbReference type="PANTHER" id="PTHR34703">
    <property type="entry name" value="ANTIPORTER SUBUNIT MNHG2-RELATED"/>
    <property type="match status" value="1"/>
</dbReference>
<dbReference type="PANTHER" id="PTHR34703:SF1">
    <property type="entry name" value="ANTIPORTER SUBUNIT MNHG2-RELATED"/>
    <property type="match status" value="1"/>
</dbReference>
<dbReference type="Pfam" id="PF03334">
    <property type="entry name" value="PhaG_MnhG_YufB"/>
    <property type="match status" value="1"/>
</dbReference>
<proteinExistence type="inferred from homology"/>
<name>MNHG2_STAA8</name>